<feature type="chain" id="PRO_0000456983" description="Peroxisome biogenesis factor 2">
    <location>
        <begin position="1"/>
        <end position="312"/>
    </location>
</feature>
<feature type="topological domain" description="Peroxisomal matrix" evidence="1">
    <location>
        <begin position="1"/>
        <end position="22"/>
    </location>
</feature>
<feature type="transmembrane region" description="Helical; Name=TM1" evidence="1">
    <location>
        <begin position="23"/>
        <end position="49"/>
    </location>
</feature>
<feature type="topological domain" description="Cytoplasmic" evidence="1">
    <location>
        <begin position="50"/>
        <end position="55"/>
    </location>
</feature>
<feature type="transmembrane region" description="Helical; Name=TM2" evidence="1">
    <location>
        <begin position="56"/>
        <end position="81"/>
    </location>
</feature>
<feature type="topological domain" description="Peroxisomal matrix" evidence="1">
    <location>
        <begin position="82"/>
        <end position="105"/>
    </location>
</feature>
<feature type="transmembrane region" description="Helical; Name=TM3" evidence="1">
    <location>
        <begin position="106"/>
        <end position="132"/>
    </location>
</feature>
<feature type="topological domain" description="Cytoplasmic" evidence="1">
    <location>
        <begin position="133"/>
        <end position="141"/>
    </location>
</feature>
<feature type="transmembrane region" description="Helical; Name=TM4" evidence="1">
    <location>
        <begin position="142"/>
        <end position="168"/>
    </location>
</feature>
<feature type="topological domain" description="Peroxisomal matrix" evidence="1">
    <location>
        <begin position="169"/>
        <end position="195"/>
    </location>
</feature>
<feature type="transmembrane region" description="Helical; Name=TM5" evidence="1">
    <location>
        <begin position="196"/>
        <end position="219"/>
    </location>
</feature>
<feature type="topological domain" description="Cytoplasmic" evidence="1">
    <location>
        <begin position="220"/>
        <end position="312"/>
    </location>
</feature>
<feature type="zinc finger region" description="RING-type" evidence="5">
    <location>
        <begin position="252"/>
        <end position="292"/>
    </location>
</feature>
<feature type="binding site" evidence="1">
    <location>
        <position position="252"/>
    </location>
    <ligand>
        <name>Zn(2+)</name>
        <dbReference type="ChEBI" id="CHEBI:29105"/>
        <label>1</label>
    </ligand>
</feature>
<feature type="binding site" evidence="1">
    <location>
        <position position="255"/>
    </location>
    <ligand>
        <name>Zn(2+)</name>
        <dbReference type="ChEBI" id="CHEBI:29105"/>
        <label>1</label>
    </ligand>
</feature>
<feature type="binding site" evidence="1">
    <location>
        <position position="267"/>
    </location>
    <ligand>
        <name>Zn(2+)</name>
        <dbReference type="ChEBI" id="CHEBI:29105"/>
        <label>2</label>
    </ligand>
</feature>
<feature type="binding site" evidence="1">
    <location>
        <position position="269"/>
    </location>
    <ligand>
        <name>Zn(2+)</name>
        <dbReference type="ChEBI" id="CHEBI:29105"/>
        <label>2</label>
    </ligand>
</feature>
<feature type="binding site" evidence="1">
    <location>
        <position position="272"/>
    </location>
    <ligand>
        <name>Zn(2+)</name>
        <dbReference type="ChEBI" id="CHEBI:29105"/>
        <label>1</label>
    </ligand>
</feature>
<feature type="binding site" evidence="1">
    <location>
        <position position="275"/>
    </location>
    <ligand>
        <name>Zn(2+)</name>
        <dbReference type="ChEBI" id="CHEBI:29105"/>
        <label>1</label>
    </ligand>
</feature>
<feature type="binding site" evidence="1">
    <location>
        <position position="288"/>
    </location>
    <ligand>
        <name>Zn(2+)</name>
        <dbReference type="ChEBI" id="CHEBI:29105"/>
        <label>2</label>
    </ligand>
</feature>
<feature type="binding site" evidence="1">
    <location>
        <position position="291"/>
    </location>
    <ligand>
        <name>Zn(2+)</name>
        <dbReference type="ChEBI" id="CHEBI:29105"/>
        <label>2</label>
    </ligand>
</feature>
<evidence type="ECO:0000250" key="1">
    <source>
        <dbReference type="UniProtKB" id="G2Q1C9"/>
    </source>
</evidence>
<evidence type="ECO:0000250" key="2">
    <source>
        <dbReference type="UniProtKB" id="P28328"/>
    </source>
</evidence>
<evidence type="ECO:0000250" key="3">
    <source>
        <dbReference type="UniProtKB" id="P32800"/>
    </source>
</evidence>
<evidence type="ECO:0000255" key="4"/>
<evidence type="ECO:0000255" key="5">
    <source>
        <dbReference type="PROSITE-ProRule" id="PRU00175"/>
    </source>
</evidence>
<evidence type="ECO:0000269" key="6">
    <source>
    </source>
</evidence>
<evidence type="ECO:0000305" key="7"/>
<comment type="function">
    <text evidence="2 3">E3 ubiquitin-protein ligase component of a retrotranslocation channel required for peroxisome organization by mediating export of the PEX5 receptor from peroxisomes to the cytosol, thereby promoting PEX5 recycling (By similarity). The retrotranslocation channel is composed of PEX2, PEX10 and PEX12; each subunit contributing transmembrane segments that coassemble into an open channel that specifically allows the passage of PEX5 through the peroxisomal membrane. PEX2 also regulates peroxisome organization by acting as a E3 ubiquitin-protein ligase (By similarity).</text>
</comment>
<comment type="catalytic activity">
    <reaction evidence="3">
        <text>[E2 ubiquitin-conjugating enzyme]-S-ubiquitinyl-L-cysteine + [acceptor protein]-L-cysteine = [E2 ubiquitin-conjugating enzyme]-L-cysteine + [acceptor protein]-S-ubiquitinyl-L-cysteine.</text>
        <dbReference type="EC" id="2.3.2.36"/>
    </reaction>
</comment>
<comment type="catalytic activity">
    <reaction evidence="2">
        <text>S-ubiquitinyl-[E2 ubiquitin-conjugating enzyme]-L-cysteine + [acceptor protein]-L-lysine = [E2 ubiquitin-conjugating enzyme]-L-cysteine + N(6)-ubiquitinyl-[acceptor protein]-L-lysine.</text>
        <dbReference type="EC" id="2.3.2.27"/>
    </reaction>
</comment>
<comment type="pathway">
    <text evidence="2">Protein modification; protein ubiquitination.</text>
</comment>
<comment type="subunit">
    <text evidence="2">Component of the PEX2-PEX10-PEX12 retrotranslocation channel.</text>
</comment>
<comment type="subcellular location">
    <subcellularLocation>
        <location evidence="2">Peroxisome membrane</location>
        <topology evidence="4">Multi-pass membrane protein</topology>
    </subcellularLocation>
</comment>
<comment type="domain">
    <text evidence="1">The three subunits of the retrotranslocation channel (PEX2, PEX10 and PEX12) coassemble in the membrane into a channel with an open 10 Angstrom pore. The RING-type zinc-fingers that catalyze PEX5 receptor ubiquitination are positioned above the pore on the cytosolic side of the complex.</text>
</comment>
<comment type="disruption phenotype">
    <text evidence="6">Mutant fishes show a loss of peroxisomal structure, associated with high-mortality (PubMed:34016526). Defects are similar to human Zellweger syndrome (ZS), characterized by developmental abnormalities in many organs, organ-specific accumulation and reduction of distinct fatty acid species, such as an accumulation of ultra-very-long-chain polyunsaturated fatty acids (ultra-VLC-PUFAs) (PubMed:34016526).</text>
</comment>
<comment type="similarity">
    <text evidence="7">Belongs to the pex2/pex10/pex12 family.</text>
</comment>
<keyword id="KW-0472">Membrane</keyword>
<keyword id="KW-0479">Metal-binding</keyword>
<keyword id="KW-0576">Peroxisome</keyword>
<keyword id="KW-0653">Protein transport</keyword>
<keyword id="KW-1185">Reference proteome</keyword>
<keyword id="KW-0808">Transferase</keyword>
<keyword id="KW-0812">Transmembrane</keyword>
<keyword id="KW-1133">Transmembrane helix</keyword>
<keyword id="KW-0813">Transport</keyword>
<keyword id="KW-0833">Ubl conjugation pathway</keyword>
<keyword id="KW-0862">Zinc</keyword>
<keyword id="KW-0863">Zinc-finger</keyword>
<name>PEX2_DANRE</name>
<protein>
    <recommendedName>
        <fullName evidence="7">Peroxisome biogenesis factor 2</fullName>
        <ecNumber evidence="3">2.3.2.27</ecNumber>
        <ecNumber evidence="3">2.3.2.36</ecNumber>
    </recommendedName>
    <alternativeName>
        <fullName evidence="7">Peroxin-2</fullName>
    </alternativeName>
</protein>
<accession>E7F4V8</accession>
<accession>A0A8M9PUF8</accession>
<accession>E9QD16</accession>
<proteinExistence type="inferred from homology"/>
<gene>
    <name type="primary">pex2</name>
</gene>
<dbReference type="EC" id="2.3.2.27" evidence="3"/>
<dbReference type="EC" id="2.3.2.36" evidence="3"/>
<dbReference type="EMBL" id="CR361560">
    <property type="status" value="NOT_ANNOTATED_CDS"/>
    <property type="molecule type" value="Genomic_DNA"/>
</dbReference>
<dbReference type="RefSeq" id="NP_001410706.1">
    <property type="nucleotide sequence ID" value="NM_001423777.1"/>
</dbReference>
<dbReference type="RefSeq" id="XP_684073.2">
    <property type="nucleotide sequence ID" value="XM_678981.7"/>
</dbReference>
<dbReference type="SMR" id="E7F4V8"/>
<dbReference type="FunCoup" id="E7F4V8">
    <property type="interactions" value="934"/>
</dbReference>
<dbReference type="STRING" id="7955.ENSDARP00000123161"/>
<dbReference type="PaxDb" id="7955-ENSDARP00000123161"/>
<dbReference type="Ensembl" id="ENSDART00000143862">
    <property type="protein sequence ID" value="ENSDARP00000123161"/>
    <property type="gene ID" value="ENSDARG00000062421"/>
</dbReference>
<dbReference type="GeneID" id="556228"/>
<dbReference type="eggNOG" id="KOG2879">
    <property type="taxonomic scope" value="Eukaryota"/>
</dbReference>
<dbReference type="HOGENOM" id="CLU_024591_3_1_1"/>
<dbReference type="InParanoid" id="E7F4V8"/>
<dbReference type="OMA" id="WHGLMEL"/>
<dbReference type="OrthoDB" id="1701437at2759"/>
<dbReference type="PhylomeDB" id="E7F4V8"/>
<dbReference type="TreeFam" id="TF105312"/>
<dbReference type="UniPathway" id="UPA00143"/>
<dbReference type="PRO" id="PR:E7F4V8"/>
<dbReference type="Proteomes" id="UP000000437">
    <property type="component" value="Alternate scaffold 24"/>
</dbReference>
<dbReference type="Proteomes" id="UP000000437">
    <property type="component" value="Chromosome 24"/>
</dbReference>
<dbReference type="Bgee" id="ENSDARG00000062421">
    <property type="expression patterns" value="Expressed in granulocyte and 19 other cell types or tissues"/>
</dbReference>
<dbReference type="GO" id="GO:0005778">
    <property type="term" value="C:peroxisomal membrane"/>
    <property type="evidence" value="ECO:0007669"/>
    <property type="project" value="UniProtKB-SubCell"/>
</dbReference>
<dbReference type="GO" id="GO:0061630">
    <property type="term" value="F:ubiquitin protein ligase activity"/>
    <property type="evidence" value="ECO:0000250"/>
    <property type="project" value="UniProtKB"/>
</dbReference>
<dbReference type="GO" id="GO:0008270">
    <property type="term" value="F:zinc ion binding"/>
    <property type="evidence" value="ECO:0007669"/>
    <property type="project" value="UniProtKB-KW"/>
</dbReference>
<dbReference type="GO" id="GO:0007031">
    <property type="term" value="P:peroxisome organization"/>
    <property type="evidence" value="ECO:0000315"/>
    <property type="project" value="UniProtKB"/>
</dbReference>
<dbReference type="GO" id="GO:0000425">
    <property type="term" value="P:pexophagy"/>
    <property type="evidence" value="ECO:0000250"/>
    <property type="project" value="UniProtKB"/>
</dbReference>
<dbReference type="GO" id="GO:0016562">
    <property type="term" value="P:protein import into peroxisome matrix, receptor recycling"/>
    <property type="evidence" value="ECO:0000250"/>
    <property type="project" value="UniProtKB"/>
</dbReference>
<dbReference type="GO" id="GO:0016567">
    <property type="term" value="P:protein ubiquitination"/>
    <property type="evidence" value="ECO:0007669"/>
    <property type="project" value="UniProtKB-UniPathway"/>
</dbReference>
<dbReference type="GO" id="GO:1990928">
    <property type="term" value="P:response to amino acid starvation"/>
    <property type="evidence" value="ECO:0000250"/>
    <property type="project" value="UniProtKB"/>
</dbReference>
<dbReference type="CDD" id="cd16526">
    <property type="entry name" value="RING-HC_PEX2"/>
    <property type="match status" value="1"/>
</dbReference>
<dbReference type="Gene3D" id="3.30.40.10">
    <property type="entry name" value="Zinc/RING finger domain, C3HC4 (zinc finger)"/>
    <property type="match status" value="1"/>
</dbReference>
<dbReference type="InterPro" id="IPR025654">
    <property type="entry name" value="PEX2/10"/>
</dbReference>
<dbReference type="InterPro" id="IPR006845">
    <property type="entry name" value="Pex_N"/>
</dbReference>
<dbReference type="InterPro" id="IPR045859">
    <property type="entry name" value="RING-HC_PEX2"/>
</dbReference>
<dbReference type="InterPro" id="IPR018957">
    <property type="entry name" value="Znf_C3HC4_RING-type"/>
</dbReference>
<dbReference type="InterPro" id="IPR001841">
    <property type="entry name" value="Znf_RING"/>
</dbReference>
<dbReference type="InterPro" id="IPR013083">
    <property type="entry name" value="Znf_RING/FYVE/PHD"/>
</dbReference>
<dbReference type="InterPro" id="IPR017907">
    <property type="entry name" value="Znf_RING_CS"/>
</dbReference>
<dbReference type="PANTHER" id="PTHR48178">
    <property type="entry name" value="PEROXISOME BIOGENESIS FACTOR 2"/>
    <property type="match status" value="1"/>
</dbReference>
<dbReference type="PANTHER" id="PTHR48178:SF1">
    <property type="entry name" value="PEROXISOME BIOGENESIS FACTOR 2"/>
    <property type="match status" value="1"/>
</dbReference>
<dbReference type="Pfam" id="PF04757">
    <property type="entry name" value="Pex2_Pex12"/>
    <property type="match status" value="1"/>
</dbReference>
<dbReference type="Pfam" id="PF00097">
    <property type="entry name" value="zf-C3HC4"/>
    <property type="match status" value="1"/>
</dbReference>
<dbReference type="SMART" id="SM00184">
    <property type="entry name" value="RING"/>
    <property type="match status" value="1"/>
</dbReference>
<dbReference type="SUPFAM" id="SSF57850">
    <property type="entry name" value="RING/U-box"/>
    <property type="match status" value="1"/>
</dbReference>
<dbReference type="PROSITE" id="PS00518">
    <property type="entry name" value="ZF_RING_1"/>
    <property type="match status" value="1"/>
</dbReference>
<dbReference type="PROSITE" id="PS50089">
    <property type="entry name" value="ZF_RING_2"/>
    <property type="match status" value="1"/>
</dbReference>
<reference key="1">
    <citation type="journal article" date="2013" name="Nature">
        <title>The zebrafish reference genome sequence and its relationship to the human genome.</title>
        <authorList>
            <person name="Howe K."/>
            <person name="Clark M.D."/>
            <person name="Torroja C.F."/>
            <person name="Torrance J."/>
            <person name="Berthelot C."/>
            <person name="Muffato M."/>
            <person name="Collins J.E."/>
            <person name="Humphray S."/>
            <person name="McLaren K."/>
            <person name="Matthews L."/>
            <person name="McLaren S."/>
            <person name="Sealy I."/>
            <person name="Caccamo M."/>
            <person name="Churcher C."/>
            <person name="Scott C."/>
            <person name="Barrett J.C."/>
            <person name="Koch R."/>
            <person name="Rauch G.J."/>
            <person name="White S."/>
            <person name="Chow W."/>
            <person name="Kilian B."/>
            <person name="Quintais L.T."/>
            <person name="Guerra-Assuncao J.A."/>
            <person name="Zhou Y."/>
            <person name="Gu Y."/>
            <person name="Yen J."/>
            <person name="Vogel J.H."/>
            <person name="Eyre T."/>
            <person name="Redmond S."/>
            <person name="Banerjee R."/>
            <person name="Chi J."/>
            <person name="Fu B."/>
            <person name="Langley E."/>
            <person name="Maguire S.F."/>
            <person name="Laird G.K."/>
            <person name="Lloyd D."/>
            <person name="Kenyon E."/>
            <person name="Donaldson S."/>
            <person name="Sehra H."/>
            <person name="Almeida-King J."/>
            <person name="Loveland J."/>
            <person name="Trevanion S."/>
            <person name="Jones M."/>
            <person name="Quail M."/>
            <person name="Willey D."/>
            <person name="Hunt A."/>
            <person name="Burton J."/>
            <person name="Sims S."/>
            <person name="McLay K."/>
            <person name="Plumb B."/>
            <person name="Davis J."/>
            <person name="Clee C."/>
            <person name="Oliver K."/>
            <person name="Clark R."/>
            <person name="Riddle C."/>
            <person name="Elliot D."/>
            <person name="Threadgold G."/>
            <person name="Harden G."/>
            <person name="Ware D."/>
            <person name="Begum S."/>
            <person name="Mortimore B."/>
            <person name="Kerry G."/>
            <person name="Heath P."/>
            <person name="Phillimore B."/>
            <person name="Tracey A."/>
            <person name="Corby N."/>
            <person name="Dunn M."/>
            <person name="Johnson C."/>
            <person name="Wood J."/>
            <person name="Clark S."/>
            <person name="Pelan S."/>
            <person name="Griffiths G."/>
            <person name="Smith M."/>
            <person name="Glithero R."/>
            <person name="Howden P."/>
            <person name="Barker N."/>
            <person name="Lloyd C."/>
            <person name="Stevens C."/>
            <person name="Harley J."/>
            <person name="Holt K."/>
            <person name="Panagiotidis G."/>
            <person name="Lovell J."/>
            <person name="Beasley H."/>
            <person name="Henderson C."/>
            <person name="Gordon D."/>
            <person name="Auger K."/>
            <person name="Wright D."/>
            <person name="Collins J."/>
            <person name="Raisen C."/>
            <person name="Dyer L."/>
            <person name="Leung K."/>
            <person name="Robertson L."/>
            <person name="Ambridge K."/>
            <person name="Leongamornlert D."/>
            <person name="McGuire S."/>
            <person name="Gilderthorp R."/>
            <person name="Griffiths C."/>
            <person name="Manthravadi D."/>
            <person name="Nichol S."/>
            <person name="Barker G."/>
            <person name="Whitehead S."/>
            <person name="Kay M."/>
            <person name="Brown J."/>
            <person name="Murnane C."/>
            <person name="Gray E."/>
            <person name="Humphries M."/>
            <person name="Sycamore N."/>
            <person name="Barker D."/>
            <person name="Saunders D."/>
            <person name="Wallis J."/>
            <person name="Babbage A."/>
            <person name="Hammond S."/>
            <person name="Mashreghi-Mohammadi M."/>
            <person name="Barr L."/>
            <person name="Martin S."/>
            <person name="Wray P."/>
            <person name="Ellington A."/>
            <person name="Matthews N."/>
            <person name="Ellwood M."/>
            <person name="Woodmansey R."/>
            <person name="Clark G."/>
            <person name="Cooper J."/>
            <person name="Tromans A."/>
            <person name="Grafham D."/>
            <person name="Skuce C."/>
            <person name="Pandian R."/>
            <person name="Andrews R."/>
            <person name="Harrison E."/>
            <person name="Kimberley A."/>
            <person name="Garnett J."/>
            <person name="Fosker N."/>
            <person name="Hall R."/>
            <person name="Garner P."/>
            <person name="Kelly D."/>
            <person name="Bird C."/>
            <person name="Palmer S."/>
            <person name="Gehring I."/>
            <person name="Berger A."/>
            <person name="Dooley C.M."/>
            <person name="Ersan-Urun Z."/>
            <person name="Eser C."/>
            <person name="Geiger H."/>
            <person name="Geisler M."/>
            <person name="Karotki L."/>
            <person name="Kirn A."/>
            <person name="Konantz J."/>
            <person name="Konantz M."/>
            <person name="Oberlander M."/>
            <person name="Rudolph-Geiger S."/>
            <person name="Teucke M."/>
            <person name="Lanz C."/>
            <person name="Raddatz G."/>
            <person name="Osoegawa K."/>
            <person name="Zhu B."/>
            <person name="Rapp A."/>
            <person name="Widaa S."/>
            <person name="Langford C."/>
            <person name="Yang F."/>
            <person name="Schuster S.C."/>
            <person name="Carter N.P."/>
            <person name="Harrow J."/>
            <person name="Ning Z."/>
            <person name="Herrero J."/>
            <person name="Searle S.M."/>
            <person name="Enright A."/>
            <person name="Geisler R."/>
            <person name="Plasterk R.H."/>
            <person name="Lee C."/>
            <person name="Westerfield M."/>
            <person name="de Jong P.J."/>
            <person name="Zon L.I."/>
            <person name="Postlethwait J.H."/>
            <person name="Nusslein-Volhard C."/>
            <person name="Hubbard T.J."/>
            <person name="Roest Crollius H."/>
            <person name="Rogers J."/>
            <person name="Stemple D.L."/>
        </authorList>
    </citation>
    <scope>NUCLEOTIDE SEQUENCE [LARGE SCALE GENOMIC DNA]</scope>
    <source>
        <strain>Tuebingen</strain>
    </source>
</reference>
<reference key="2">
    <citation type="journal article" date="2021" name="Mol. Genet. Metab.">
        <title>Zebrafish model of human Zellweger syndrome reveals organ-specific accumulation of distinct fatty acid species and widespread gene expression changes.</title>
        <authorList>
            <person name="Takashima S."/>
            <person name="Takemoto S."/>
            <person name="Toyoshi K."/>
            <person name="Ohba A."/>
            <person name="Shimozawa N."/>
        </authorList>
    </citation>
    <scope>DISRUPTION PHENOTYPE</scope>
</reference>
<sequence>MAGAGGDKPFAKAGPSPLSRVLRISQLDAFELDGALEQLVWSQFTQCFQHFKPGILTPVEPELKALLQLLLWRFTIYSNSATVGQSLLNIRYKNALIPGQKYRPMSRPQKFWFALLTVGEKWFRERSHSLFLNHPAESNARKARKVLSILLGLTKAASLVNFLLFLQRGTFPTLTERLLGVQPVFSRPQGPRDINFQYLNRELLWHGFAEFLIFLLPLINVWKLKAGVSALFSPLSDLTGTQSSEETHLTECAICGEWPTMPHSIGCKHVFCYYCVKSNVIADIYFTCPKCGAETGQIEPVRLQVGTELLQS</sequence>
<organism>
    <name type="scientific">Danio rerio</name>
    <name type="common">Zebrafish</name>
    <name type="synonym">Brachydanio rerio</name>
    <dbReference type="NCBI Taxonomy" id="7955"/>
    <lineage>
        <taxon>Eukaryota</taxon>
        <taxon>Metazoa</taxon>
        <taxon>Chordata</taxon>
        <taxon>Craniata</taxon>
        <taxon>Vertebrata</taxon>
        <taxon>Euteleostomi</taxon>
        <taxon>Actinopterygii</taxon>
        <taxon>Neopterygii</taxon>
        <taxon>Teleostei</taxon>
        <taxon>Ostariophysi</taxon>
        <taxon>Cypriniformes</taxon>
        <taxon>Danionidae</taxon>
        <taxon>Danioninae</taxon>
        <taxon>Danio</taxon>
    </lineage>
</organism>